<sequence length="465" mass="52562">MSERREEERGRTGFSMKKNHNSNFNRRNQEQIHQKLPTKISGPLTLEQLCAYQHMFRIQEISSIIKSHSFEVPNARNRSPSPPPVYDAEGKRINTREQLYKKKLMNERFKLVEVVSKLIPGYSAPKDYKRPTTFQEKYYIPVSQYPQINFVGLLLGPRGKTLRKMQEDSGCKIAIRGRGSVKEGKTSSDLPPGAMDFSDPLHCLIIADNEEKIENGIKACRNIVIKAVTSPEGQNELKRGQLRELAELNGTLREDNRPCATCGQQGHKKYECPHRETFAMKIICRRCNQPGHTIRDCTSDSNYGKQIHSSRYNNEMPYHRTSTAVDQPSAYSRYGYTPRNHNGSSRFNDNSKYLNNGNKRATPQPELELETSHKRQQINPTSSSQDTLSHQTNHMTMTTIEDSGIDKLQLPAGMSNENPIPQPVNFNEIQINDVSGPNGTLEAPPGLDLGNNDSNITLQGPPGLN</sequence>
<evidence type="ECO:0000250" key="1"/>
<evidence type="ECO:0000255" key="2">
    <source>
        <dbReference type="PROSITE-ProRule" id="PRU00047"/>
    </source>
</evidence>
<evidence type="ECO:0000255" key="3">
    <source>
        <dbReference type="PROSITE-ProRule" id="PRU00117"/>
    </source>
</evidence>
<evidence type="ECO:0000256" key="4">
    <source>
        <dbReference type="SAM" id="MobiDB-lite"/>
    </source>
</evidence>
<evidence type="ECO:0000305" key="5"/>
<reference key="1">
    <citation type="journal article" date="2004" name="Nature">
        <title>Genome evolution in yeasts.</title>
        <authorList>
            <person name="Dujon B."/>
            <person name="Sherman D."/>
            <person name="Fischer G."/>
            <person name="Durrens P."/>
            <person name="Casaregola S."/>
            <person name="Lafontaine I."/>
            <person name="de Montigny J."/>
            <person name="Marck C."/>
            <person name="Neuveglise C."/>
            <person name="Talla E."/>
            <person name="Goffard N."/>
            <person name="Frangeul L."/>
            <person name="Aigle M."/>
            <person name="Anthouard V."/>
            <person name="Babour A."/>
            <person name="Barbe V."/>
            <person name="Barnay S."/>
            <person name="Blanchin S."/>
            <person name="Beckerich J.-M."/>
            <person name="Beyne E."/>
            <person name="Bleykasten C."/>
            <person name="Boisrame A."/>
            <person name="Boyer J."/>
            <person name="Cattolico L."/>
            <person name="Confanioleri F."/>
            <person name="de Daruvar A."/>
            <person name="Despons L."/>
            <person name="Fabre E."/>
            <person name="Fairhead C."/>
            <person name="Ferry-Dumazet H."/>
            <person name="Groppi A."/>
            <person name="Hantraye F."/>
            <person name="Hennequin C."/>
            <person name="Jauniaux N."/>
            <person name="Joyet P."/>
            <person name="Kachouri R."/>
            <person name="Kerrest A."/>
            <person name="Koszul R."/>
            <person name="Lemaire M."/>
            <person name="Lesur I."/>
            <person name="Ma L."/>
            <person name="Muller H."/>
            <person name="Nicaud J.-M."/>
            <person name="Nikolski M."/>
            <person name="Oztas S."/>
            <person name="Ozier-Kalogeropoulos O."/>
            <person name="Pellenz S."/>
            <person name="Potier S."/>
            <person name="Richard G.-F."/>
            <person name="Straub M.-L."/>
            <person name="Suleau A."/>
            <person name="Swennen D."/>
            <person name="Tekaia F."/>
            <person name="Wesolowski-Louvel M."/>
            <person name="Westhof E."/>
            <person name="Wirth B."/>
            <person name="Zeniou-Meyer M."/>
            <person name="Zivanovic Y."/>
            <person name="Bolotin-Fukuhara M."/>
            <person name="Thierry A."/>
            <person name="Bouchier C."/>
            <person name="Caudron B."/>
            <person name="Scarpelli C."/>
            <person name="Gaillardin C."/>
            <person name="Weissenbach J."/>
            <person name="Wincker P."/>
            <person name="Souciet J.-L."/>
        </authorList>
    </citation>
    <scope>NUCLEOTIDE SEQUENCE [LARGE SCALE GENOMIC DNA]</scope>
    <source>
        <strain>ATCC 2001 / BCRC 20586 / JCM 3761 / NBRC 0622 / NRRL Y-65 / CBS 138</strain>
    </source>
</reference>
<keyword id="KW-0479">Metal-binding</keyword>
<keyword id="KW-0507">mRNA processing</keyword>
<keyword id="KW-0508">mRNA splicing</keyword>
<keyword id="KW-0539">Nucleus</keyword>
<keyword id="KW-1185">Reference proteome</keyword>
<keyword id="KW-0677">Repeat</keyword>
<keyword id="KW-0694">RNA-binding</keyword>
<keyword id="KW-0747">Spliceosome</keyword>
<keyword id="KW-0862">Zinc</keyword>
<keyword id="KW-0863">Zinc-finger</keyword>
<organism>
    <name type="scientific">Candida glabrata (strain ATCC 2001 / BCRC 20586 / JCM 3761 / NBRC 0622 / NRRL Y-65 / CBS 138)</name>
    <name type="common">Yeast</name>
    <name type="synonym">Nakaseomyces glabratus</name>
    <dbReference type="NCBI Taxonomy" id="284593"/>
    <lineage>
        <taxon>Eukaryota</taxon>
        <taxon>Fungi</taxon>
        <taxon>Dikarya</taxon>
        <taxon>Ascomycota</taxon>
        <taxon>Saccharomycotina</taxon>
        <taxon>Saccharomycetes</taxon>
        <taxon>Saccharomycetales</taxon>
        <taxon>Saccharomycetaceae</taxon>
        <taxon>Nakaseomyces</taxon>
    </lineage>
</organism>
<feature type="chain" id="PRO_0000256146" description="Branchpoint-bridging protein">
    <location>
        <begin position="1"/>
        <end position="465"/>
    </location>
</feature>
<feature type="domain" description="KH" evidence="3">
    <location>
        <begin position="139"/>
        <end position="205"/>
    </location>
</feature>
<feature type="zinc finger region" description="CCHC-type 1" evidence="2">
    <location>
        <begin position="257"/>
        <end position="274"/>
    </location>
</feature>
<feature type="zinc finger region" description="CCHC-type 2" evidence="2">
    <location>
        <begin position="282"/>
        <end position="299"/>
    </location>
</feature>
<feature type="region of interest" description="Disordered" evidence="4">
    <location>
        <begin position="1"/>
        <end position="22"/>
    </location>
</feature>
<feature type="region of interest" description="Disordered" evidence="4">
    <location>
        <begin position="324"/>
        <end position="391"/>
    </location>
</feature>
<feature type="region of interest" description="Disordered" evidence="4">
    <location>
        <begin position="431"/>
        <end position="465"/>
    </location>
</feature>
<feature type="compositionally biased region" description="Basic and acidic residues" evidence="4">
    <location>
        <begin position="1"/>
        <end position="11"/>
    </location>
</feature>
<feature type="compositionally biased region" description="Polar residues" evidence="4">
    <location>
        <begin position="339"/>
        <end position="361"/>
    </location>
</feature>
<feature type="compositionally biased region" description="Polar residues" evidence="4">
    <location>
        <begin position="377"/>
        <end position="391"/>
    </location>
</feature>
<protein>
    <recommendedName>
        <fullName>Branchpoint-bridging protein</fullName>
    </recommendedName>
</protein>
<accession>Q6FW77</accession>
<proteinExistence type="inferred from homology"/>
<gene>
    <name type="primary">BBP</name>
    <name type="ordered locus">CAGL0D02354g</name>
</gene>
<dbReference type="EMBL" id="CR380950">
    <property type="protein sequence ID" value="CAG58428.1"/>
    <property type="molecule type" value="Genomic_DNA"/>
</dbReference>
<dbReference type="RefSeq" id="XP_445517.1">
    <property type="nucleotide sequence ID" value="XM_445517.1"/>
</dbReference>
<dbReference type="SMR" id="Q6FW77"/>
<dbReference type="FunCoup" id="Q6FW77">
    <property type="interactions" value="60"/>
</dbReference>
<dbReference type="STRING" id="284593.Q6FW77"/>
<dbReference type="EnsemblFungi" id="CAGL0D02354g-T">
    <property type="protein sequence ID" value="CAGL0D02354g-T-p1"/>
    <property type="gene ID" value="CAGL0D02354g"/>
</dbReference>
<dbReference type="KEGG" id="cgr:2887047"/>
<dbReference type="CGD" id="CAL0128463">
    <property type="gene designation" value="CAGL0D02354g"/>
</dbReference>
<dbReference type="VEuPathDB" id="FungiDB:CAGL0D02354g"/>
<dbReference type="eggNOG" id="KOG0119">
    <property type="taxonomic scope" value="Eukaryota"/>
</dbReference>
<dbReference type="HOGENOM" id="CLU_016864_1_1_1"/>
<dbReference type="InParanoid" id="Q6FW77"/>
<dbReference type="Proteomes" id="UP000002428">
    <property type="component" value="Chromosome D"/>
</dbReference>
<dbReference type="GO" id="GO:0000243">
    <property type="term" value="C:commitment complex"/>
    <property type="evidence" value="ECO:0007669"/>
    <property type="project" value="EnsemblFungi"/>
</dbReference>
<dbReference type="GO" id="GO:0005829">
    <property type="term" value="C:cytosol"/>
    <property type="evidence" value="ECO:0007669"/>
    <property type="project" value="EnsemblFungi"/>
</dbReference>
<dbReference type="GO" id="GO:0003729">
    <property type="term" value="F:mRNA binding"/>
    <property type="evidence" value="ECO:0007669"/>
    <property type="project" value="TreeGrafter"/>
</dbReference>
<dbReference type="GO" id="GO:0045131">
    <property type="term" value="F:pre-mRNA branch point binding"/>
    <property type="evidence" value="ECO:0007669"/>
    <property type="project" value="EnsemblFungi"/>
</dbReference>
<dbReference type="GO" id="GO:0008270">
    <property type="term" value="F:zinc ion binding"/>
    <property type="evidence" value="ECO:0007669"/>
    <property type="project" value="UniProtKB-KW"/>
</dbReference>
<dbReference type="GO" id="GO:0000398">
    <property type="term" value="P:mRNA splicing, via spliceosome"/>
    <property type="evidence" value="ECO:0007669"/>
    <property type="project" value="EnsemblFungi"/>
</dbReference>
<dbReference type="GO" id="GO:0048024">
    <property type="term" value="P:regulation of mRNA splicing, via spliceosome"/>
    <property type="evidence" value="ECO:0007669"/>
    <property type="project" value="TreeGrafter"/>
</dbReference>
<dbReference type="CDD" id="cd02395">
    <property type="entry name" value="KH-I_BBP"/>
    <property type="match status" value="1"/>
</dbReference>
<dbReference type="FunFam" id="3.30.1370.10:FF:000024">
    <property type="entry name" value="Branchpoint-bridging protein-like protein"/>
    <property type="match status" value="1"/>
</dbReference>
<dbReference type="Gene3D" id="6.10.140.1790">
    <property type="match status" value="1"/>
</dbReference>
<dbReference type="Gene3D" id="3.30.1370.10">
    <property type="entry name" value="K Homology domain, type 1"/>
    <property type="match status" value="1"/>
</dbReference>
<dbReference type="Gene3D" id="4.10.60.10">
    <property type="entry name" value="Zinc finger, CCHC-type"/>
    <property type="match status" value="1"/>
</dbReference>
<dbReference type="InterPro" id="IPR045071">
    <property type="entry name" value="BBP-like"/>
</dbReference>
<dbReference type="InterPro" id="IPR055256">
    <property type="entry name" value="KH_1_KHDC4/BBP-like"/>
</dbReference>
<dbReference type="InterPro" id="IPR004087">
    <property type="entry name" value="KH_dom"/>
</dbReference>
<dbReference type="InterPro" id="IPR036612">
    <property type="entry name" value="KH_dom_type_1_sf"/>
</dbReference>
<dbReference type="InterPro" id="IPR032570">
    <property type="entry name" value="SF1-HH"/>
</dbReference>
<dbReference type="InterPro" id="IPR047086">
    <property type="entry name" value="SF1-HH_sf"/>
</dbReference>
<dbReference type="InterPro" id="IPR001878">
    <property type="entry name" value="Znf_CCHC"/>
</dbReference>
<dbReference type="InterPro" id="IPR036875">
    <property type="entry name" value="Znf_CCHC_sf"/>
</dbReference>
<dbReference type="PANTHER" id="PTHR11208">
    <property type="entry name" value="RNA-BINDING PROTEIN RELATED"/>
    <property type="match status" value="1"/>
</dbReference>
<dbReference type="PANTHER" id="PTHR11208:SF45">
    <property type="entry name" value="SPLICING FACTOR 1"/>
    <property type="match status" value="1"/>
</dbReference>
<dbReference type="Pfam" id="PF22675">
    <property type="entry name" value="KH-I_KHDC4-BBP"/>
    <property type="match status" value="1"/>
</dbReference>
<dbReference type="Pfam" id="PF16275">
    <property type="entry name" value="SF1-HH"/>
    <property type="match status" value="1"/>
</dbReference>
<dbReference type="Pfam" id="PF00098">
    <property type="entry name" value="zf-CCHC"/>
    <property type="match status" value="1"/>
</dbReference>
<dbReference type="SMART" id="SM00322">
    <property type="entry name" value="KH"/>
    <property type="match status" value="1"/>
</dbReference>
<dbReference type="SMART" id="SM00343">
    <property type="entry name" value="ZnF_C2HC"/>
    <property type="match status" value="2"/>
</dbReference>
<dbReference type="SUPFAM" id="SSF54791">
    <property type="entry name" value="Eukaryotic type KH-domain (KH-domain type I)"/>
    <property type="match status" value="1"/>
</dbReference>
<dbReference type="SUPFAM" id="SSF57756">
    <property type="entry name" value="Retrovirus zinc finger-like domains"/>
    <property type="match status" value="1"/>
</dbReference>
<dbReference type="PROSITE" id="PS50084">
    <property type="entry name" value="KH_TYPE_1"/>
    <property type="match status" value="1"/>
</dbReference>
<dbReference type="PROSITE" id="PS50158">
    <property type="entry name" value="ZF_CCHC"/>
    <property type="match status" value="2"/>
</dbReference>
<comment type="function">
    <text evidence="1">Necessary for the splicing of pre-mRNA. Has a role in the recognition of the branch site (5'-UACUAAC-3'), the pyrimidine tract and the 3'-splice site at the 3'-end of introns (By similarity).</text>
</comment>
<comment type="subcellular location">
    <subcellularLocation>
        <location evidence="1">Nucleus</location>
    </subcellularLocation>
</comment>
<comment type="similarity">
    <text evidence="5">Belongs to the BBP/SF1 family.</text>
</comment>
<name>BBP_CANGA</name>